<keyword id="KW-0028">Amino-acid biosynthesis</keyword>
<keyword id="KW-0057">Aromatic amino acid biosynthesis</keyword>
<keyword id="KW-0067">ATP-binding</keyword>
<keyword id="KW-0963">Cytoplasm</keyword>
<keyword id="KW-0418">Kinase</keyword>
<keyword id="KW-0460">Magnesium</keyword>
<keyword id="KW-0479">Metal-binding</keyword>
<keyword id="KW-0547">Nucleotide-binding</keyword>
<keyword id="KW-0808">Transferase</keyword>
<protein>
    <recommendedName>
        <fullName evidence="1">Shikimate kinase</fullName>
        <shortName evidence="1">SK</shortName>
        <ecNumber evidence="1">2.7.1.71</ecNumber>
    </recommendedName>
</protein>
<organism>
    <name type="scientific">Streptococcus pyogenes serotype M12 (strain MGAS2096)</name>
    <dbReference type="NCBI Taxonomy" id="370553"/>
    <lineage>
        <taxon>Bacteria</taxon>
        <taxon>Bacillati</taxon>
        <taxon>Bacillota</taxon>
        <taxon>Bacilli</taxon>
        <taxon>Lactobacillales</taxon>
        <taxon>Streptococcaceae</taxon>
        <taxon>Streptococcus</taxon>
    </lineage>
</organism>
<sequence>MTKVLLGFMGVGKTTVSKHLSMHCKDMDAIIEAKIGMSIAAFFEQHGEIAFRTIESQVLKDLLFANDNSVIVTGGGVVVLQENRQLLRKNHQHNILLVASFETLYQRLKHDKKSQRPLFLKYSKEAFYEFYQQRMVFYEGLSDLVIRVDHRTPEEVANIIEGY</sequence>
<dbReference type="EC" id="2.7.1.71" evidence="1"/>
<dbReference type="EMBL" id="CP000261">
    <property type="protein sequence ID" value="ABF36214.1"/>
    <property type="molecule type" value="Genomic_DNA"/>
</dbReference>
<dbReference type="SMR" id="Q1JB44"/>
<dbReference type="KEGG" id="spj:MGAS2096_Spy1162"/>
<dbReference type="HOGENOM" id="CLU_057607_4_3_9"/>
<dbReference type="UniPathway" id="UPA00053">
    <property type="reaction ID" value="UER00088"/>
</dbReference>
<dbReference type="GO" id="GO:0005829">
    <property type="term" value="C:cytosol"/>
    <property type="evidence" value="ECO:0007669"/>
    <property type="project" value="TreeGrafter"/>
</dbReference>
<dbReference type="GO" id="GO:0005524">
    <property type="term" value="F:ATP binding"/>
    <property type="evidence" value="ECO:0007669"/>
    <property type="project" value="UniProtKB-UniRule"/>
</dbReference>
<dbReference type="GO" id="GO:0000287">
    <property type="term" value="F:magnesium ion binding"/>
    <property type="evidence" value="ECO:0007669"/>
    <property type="project" value="UniProtKB-UniRule"/>
</dbReference>
<dbReference type="GO" id="GO:0004765">
    <property type="term" value="F:shikimate kinase activity"/>
    <property type="evidence" value="ECO:0007669"/>
    <property type="project" value="UniProtKB-UniRule"/>
</dbReference>
<dbReference type="GO" id="GO:0008652">
    <property type="term" value="P:amino acid biosynthetic process"/>
    <property type="evidence" value="ECO:0007669"/>
    <property type="project" value="UniProtKB-KW"/>
</dbReference>
<dbReference type="GO" id="GO:0009073">
    <property type="term" value="P:aromatic amino acid family biosynthetic process"/>
    <property type="evidence" value="ECO:0007669"/>
    <property type="project" value="UniProtKB-KW"/>
</dbReference>
<dbReference type="GO" id="GO:0009423">
    <property type="term" value="P:chorismate biosynthetic process"/>
    <property type="evidence" value="ECO:0007669"/>
    <property type="project" value="UniProtKB-UniRule"/>
</dbReference>
<dbReference type="CDD" id="cd00464">
    <property type="entry name" value="SK"/>
    <property type="match status" value="1"/>
</dbReference>
<dbReference type="Gene3D" id="3.40.50.300">
    <property type="entry name" value="P-loop containing nucleotide triphosphate hydrolases"/>
    <property type="match status" value="1"/>
</dbReference>
<dbReference type="HAMAP" id="MF_00109">
    <property type="entry name" value="Shikimate_kinase"/>
    <property type="match status" value="1"/>
</dbReference>
<dbReference type="InterPro" id="IPR027417">
    <property type="entry name" value="P-loop_NTPase"/>
</dbReference>
<dbReference type="InterPro" id="IPR031322">
    <property type="entry name" value="Shikimate/glucono_kinase"/>
</dbReference>
<dbReference type="InterPro" id="IPR000623">
    <property type="entry name" value="Shikimate_kinase/TSH1"/>
</dbReference>
<dbReference type="PANTHER" id="PTHR21087">
    <property type="entry name" value="SHIKIMATE KINASE"/>
    <property type="match status" value="1"/>
</dbReference>
<dbReference type="PANTHER" id="PTHR21087:SF16">
    <property type="entry name" value="SHIKIMATE KINASE 1, CHLOROPLASTIC"/>
    <property type="match status" value="1"/>
</dbReference>
<dbReference type="Pfam" id="PF01202">
    <property type="entry name" value="SKI"/>
    <property type="match status" value="1"/>
</dbReference>
<dbReference type="PRINTS" id="PR01100">
    <property type="entry name" value="SHIKIMTKNASE"/>
</dbReference>
<dbReference type="SUPFAM" id="SSF52540">
    <property type="entry name" value="P-loop containing nucleoside triphosphate hydrolases"/>
    <property type="match status" value="1"/>
</dbReference>
<accession>Q1JB44</accession>
<evidence type="ECO:0000255" key="1">
    <source>
        <dbReference type="HAMAP-Rule" id="MF_00109"/>
    </source>
</evidence>
<feature type="chain" id="PRO_1000094419" description="Shikimate kinase">
    <location>
        <begin position="1"/>
        <end position="163"/>
    </location>
</feature>
<feature type="binding site" evidence="1">
    <location>
        <begin position="10"/>
        <end position="15"/>
    </location>
    <ligand>
        <name>ATP</name>
        <dbReference type="ChEBI" id="CHEBI:30616"/>
    </ligand>
</feature>
<feature type="binding site" evidence="1">
    <location>
        <position position="14"/>
    </location>
    <ligand>
        <name>Mg(2+)</name>
        <dbReference type="ChEBI" id="CHEBI:18420"/>
    </ligand>
</feature>
<feature type="binding site" evidence="1">
    <location>
        <position position="28"/>
    </location>
    <ligand>
        <name>substrate</name>
    </ligand>
</feature>
<feature type="binding site" evidence="1">
    <location>
        <position position="52"/>
    </location>
    <ligand>
        <name>substrate</name>
    </ligand>
</feature>
<feature type="binding site" evidence="1">
    <location>
        <position position="75"/>
    </location>
    <ligand>
        <name>substrate</name>
    </ligand>
</feature>
<feature type="binding site" evidence="1">
    <location>
        <position position="116"/>
    </location>
    <ligand>
        <name>ATP</name>
        <dbReference type="ChEBI" id="CHEBI:30616"/>
    </ligand>
</feature>
<feature type="binding site" evidence="1">
    <location>
        <position position="134"/>
    </location>
    <ligand>
        <name>substrate</name>
    </ligand>
</feature>
<feature type="binding site" evidence="1">
    <location>
        <position position="151"/>
    </location>
    <ligand>
        <name>ATP</name>
        <dbReference type="ChEBI" id="CHEBI:30616"/>
    </ligand>
</feature>
<proteinExistence type="inferred from homology"/>
<reference key="1">
    <citation type="journal article" date="2006" name="Proc. Natl. Acad. Sci. U.S.A.">
        <title>Molecular genetic anatomy of inter- and intraserotype variation in the human bacterial pathogen group A Streptococcus.</title>
        <authorList>
            <person name="Beres S.B."/>
            <person name="Richter E.W."/>
            <person name="Nagiec M.J."/>
            <person name="Sumby P."/>
            <person name="Porcella S.F."/>
            <person name="DeLeo F.R."/>
            <person name="Musser J.M."/>
        </authorList>
    </citation>
    <scope>NUCLEOTIDE SEQUENCE [LARGE SCALE GENOMIC DNA]</scope>
    <source>
        <strain>MGAS2096</strain>
    </source>
</reference>
<name>AROK_STRPB</name>
<comment type="function">
    <text evidence="1">Catalyzes the specific phosphorylation of the 3-hydroxyl group of shikimic acid using ATP as a cosubstrate.</text>
</comment>
<comment type="catalytic activity">
    <reaction evidence="1">
        <text>shikimate + ATP = 3-phosphoshikimate + ADP + H(+)</text>
        <dbReference type="Rhea" id="RHEA:13121"/>
        <dbReference type="ChEBI" id="CHEBI:15378"/>
        <dbReference type="ChEBI" id="CHEBI:30616"/>
        <dbReference type="ChEBI" id="CHEBI:36208"/>
        <dbReference type="ChEBI" id="CHEBI:145989"/>
        <dbReference type="ChEBI" id="CHEBI:456216"/>
        <dbReference type="EC" id="2.7.1.71"/>
    </reaction>
</comment>
<comment type="cofactor">
    <cofactor evidence="1">
        <name>Mg(2+)</name>
        <dbReference type="ChEBI" id="CHEBI:18420"/>
    </cofactor>
    <text evidence="1">Binds 1 Mg(2+) ion per subunit.</text>
</comment>
<comment type="pathway">
    <text evidence="1">Metabolic intermediate biosynthesis; chorismate biosynthesis; chorismate from D-erythrose 4-phosphate and phosphoenolpyruvate: step 5/7.</text>
</comment>
<comment type="subunit">
    <text evidence="1">Monomer.</text>
</comment>
<comment type="subcellular location">
    <subcellularLocation>
        <location evidence="1">Cytoplasm</location>
    </subcellularLocation>
</comment>
<comment type="similarity">
    <text evidence="1">Belongs to the shikimate kinase family.</text>
</comment>
<gene>
    <name evidence="1" type="primary">aroK</name>
    <name type="ordered locus">MGAS2096_Spy1162</name>
</gene>